<name>AROC_BRUC2</name>
<keyword id="KW-0028">Amino-acid biosynthesis</keyword>
<keyword id="KW-0057">Aromatic amino acid biosynthesis</keyword>
<keyword id="KW-0274">FAD</keyword>
<keyword id="KW-0285">Flavoprotein</keyword>
<keyword id="KW-0288">FMN</keyword>
<keyword id="KW-0456">Lyase</keyword>
<keyword id="KW-0521">NADP</keyword>
<keyword id="KW-1185">Reference proteome</keyword>
<accession>A9M8V2</accession>
<dbReference type="EC" id="4.2.3.5" evidence="1"/>
<dbReference type="EMBL" id="CP000872">
    <property type="protein sequence ID" value="ABX61516.1"/>
    <property type="molecule type" value="Genomic_DNA"/>
</dbReference>
<dbReference type="RefSeq" id="WP_002963585.1">
    <property type="nucleotide sequence ID" value="NC_010103.1"/>
</dbReference>
<dbReference type="SMR" id="A9M8V2"/>
<dbReference type="GeneID" id="97534201"/>
<dbReference type="KEGG" id="bcs:BCAN_A0432"/>
<dbReference type="HOGENOM" id="CLU_034547_0_0_5"/>
<dbReference type="PhylomeDB" id="A9M8V2"/>
<dbReference type="UniPathway" id="UPA00053">
    <property type="reaction ID" value="UER00090"/>
</dbReference>
<dbReference type="PRO" id="PR:A9M8V2"/>
<dbReference type="Proteomes" id="UP000001385">
    <property type="component" value="Chromosome I"/>
</dbReference>
<dbReference type="GO" id="GO:0005829">
    <property type="term" value="C:cytosol"/>
    <property type="evidence" value="ECO:0007669"/>
    <property type="project" value="TreeGrafter"/>
</dbReference>
<dbReference type="GO" id="GO:0004107">
    <property type="term" value="F:chorismate synthase activity"/>
    <property type="evidence" value="ECO:0007669"/>
    <property type="project" value="UniProtKB-UniRule"/>
</dbReference>
<dbReference type="GO" id="GO:0010181">
    <property type="term" value="F:FMN binding"/>
    <property type="evidence" value="ECO:0007669"/>
    <property type="project" value="TreeGrafter"/>
</dbReference>
<dbReference type="GO" id="GO:0008652">
    <property type="term" value="P:amino acid biosynthetic process"/>
    <property type="evidence" value="ECO:0007669"/>
    <property type="project" value="UniProtKB-KW"/>
</dbReference>
<dbReference type="GO" id="GO:0009073">
    <property type="term" value="P:aromatic amino acid family biosynthetic process"/>
    <property type="evidence" value="ECO:0007669"/>
    <property type="project" value="UniProtKB-KW"/>
</dbReference>
<dbReference type="GO" id="GO:0009423">
    <property type="term" value="P:chorismate biosynthetic process"/>
    <property type="evidence" value="ECO:0007669"/>
    <property type="project" value="UniProtKB-UniRule"/>
</dbReference>
<dbReference type="CDD" id="cd07304">
    <property type="entry name" value="Chorismate_synthase"/>
    <property type="match status" value="1"/>
</dbReference>
<dbReference type="Gene3D" id="3.60.150.10">
    <property type="entry name" value="Chorismate synthase AroC"/>
    <property type="match status" value="1"/>
</dbReference>
<dbReference type="HAMAP" id="MF_00300">
    <property type="entry name" value="Chorismate_synth"/>
    <property type="match status" value="1"/>
</dbReference>
<dbReference type="InterPro" id="IPR000453">
    <property type="entry name" value="Chorismate_synth"/>
</dbReference>
<dbReference type="InterPro" id="IPR035904">
    <property type="entry name" value="Chorismate_synth_AroC_sf"/>
</dbReference>
<dbReference type="InterPro" id="IPR020541">
    <property type="entry name" value="Chorismate_synthase_CS"/>
</dbReference>
<dbReference type="NCBIfam" id="TIGR00033">
    <property type="entry name" value="aroC"/>
    <property type="match status" value="1"/>
</dbReference>
<dbReference type="NCBIfam" id="NF003793">
    <property type="entry name" value="PRK05382.1"/>
    <property type="match status" value="1"/>
</dbReference>
<dbReference type="PANTHER" id="PTHR21085">
    <property type="entry name" value="CHORISMATE SYNTHASE"/>
    <property type="match status" value="1"/>
</dbReference>
<dbReference type="PANTHER" id="PTHR21085:SF0">
    <property type="entry name" value="CHORISMATE SYNTHASE"/>
    <property type="match status" value="1"/>
</dbReference>
<dbReference type="Pfam" id="PF01264">
    <property type="entry name" value="Chorismate_synt"/>
    <property type="match status" value="1"/>
</dbReference>
<dbReference type="PIRSF" id="PIRSF001456">
    <property type="entry name" value="Chorismate_synth"/>
    <property type="match status" value="1"/>
</dbReference>
<dbReference type="SUPFAM" id="SSF103263">
    <property type="entry name" value="Chorismate synthase, AroC"/>
    <property type="match status" value="1"/>
</dbReference>
<dbReference type="PROSITE" id="PS00787">
    <property type="entry name" value="CHORISMATE_SYNTHASE_1"/>
    <property type="match status" value="1"/>
</dbReference>
<dbReference type="PROSITE" id="PS00788">
    <property type="entry name" value="CHORISMATE_SYNTHASE_2"/>
    <property type="match status" value="1"/>
</dbReference>
<dbReference type="PROSITE" id="PS00789">
    <property type="entry name" value="CHORISMATE_SYNTHASE_3"/>
    <property type="match status" value="1"/>
</dbReference>
<sequence>MSHNSFGHLFRVTTWGESHGLALGCVVDGCPPGITFTEAEIQSFLDKRKPGQSKYTTQRREPDQVRVLSGVLLGEDGVTMTTTGTPISMMIENTDQRSKDYGEIARQYRPGHADYAYDVKYGIRDYRGGGRSSARETAARVAAGAIARKVVPGLEVRGALVSIGAHDIDRSRWNWAEVDNNPFFTPDAGSVEVFADYLDGIRKNGSSVGAIIEIVAEGVPAGIGAPIYGKLDQDIASYLMSINAVKGVEIGNGFEAARLTGEENADEMRMGNDGKPIFLSNHAGGVLGGIATGAPVVARFAVKPTSSILTPRRSIDKDGNEVDVMTRGRHDPCVGIRAVPIGEAMVACAIADHYLRHRGQTGRV</sequence>
<evidence type="ECO:0000255" key="1">
    <source>
        <dbReference type="HAMAP-Rule" id="MF_00300"/>
    </source>
</evidence>
<reference key="1">
    <citation type="submission" date="2007-10" db="EMBL/GenBank/DDBJ databases">
        <title>Brucella canis ATCC 23365 whole genome shotgun sequencing project.</title>
        <authorList>
            <person name="Setubal J.C."/>
            <person name="Bowns C."/>
            <person name="Boyle S."/>
            <person name="Crasta O.R."/>
            <person name="Czar M.J."/>
            <person name="Dharmanolla C."/>
            <person name="Gillespie J.J."/>
            <person name="Kenyon R.W."/>
            <person name="Lu J."/>
            <person name="Mane S."/>
            <person name="Mohapatra S."/>
            <person name="Nagrani S."/>
            <person name="Purkayastha A."/>
            <person name="Rajasimha H.K."/>
            <person name="Shallom J.M."/>
            <person name="Shallom S."/>
            <person name="Shukla M."/>
            <person name="Snyder E.E."/>
            <person name="Sobral B.W."/>
            <person name="Wattam A.R."/>
            <person name="Will R."/>
            <person name="Williams K."/>
            <person name="Yoo H."/>
            <person name="Bruce D."/>
            <person name="Detter C."/>
            <person name="Munk C."/>
            <person name="Brettin T.S."/>
        </authorList>
    </citation>
    <scope>NUCLEOTIDE SEQUENCE [LARGE SCALE GENOMIC DNA]</scope>
    <source>
        <strain>ATCC 23365 / NCTC 10854 / RM-666</strain>
    </source>
</reference>
<protein>
    <recommendedName>
        <fullName evidence="1">Chorismate synthase</fullName>
        <shortName evidence="1">CS</shortName>
        <ecNumber evidence="1">4.2.3.5</ecNumber>
    </recommendedName>
    <alternativeName>
        <fullName evidence="1">5-enolpyruvylshikimate-3-phosphate phospholyase</fullName>
    </alternativeName>
</protein>
<proteinExistence type="inferred from homology"/>
<feature type="chain" id="PRO_1000078986" description="Chorismate synthase">
    <location>
        <begin position="1"/>
        <end position="364"/>
    </location>
</feature>
<feature type="binding site" evidence="1">
    <location>
        <position position="48"/>
    </location>
    <ligand>
        <name>NADP(+)</name>
        <dbReference type="ChEBI" id="CHEBI:58349"/>
    </ligand>
</feature>
<feature type="binding site" evidence="1">
    <location>
        <begin position="131"/>
        <end position="133"/>
    </location>
    <ligand>
        <name>FMN</name>
        <dbReference type="ChEBI" id="CHEBI:58210"/>
    </ligand>
</feature>
<feature type="binding site" evidence="1">
    <location>
        <begin position="243"/>
        <end position="244"/>
    </location>
    <ligand>
        <name>FMN</name>
        <dbReference type="ChEBI" id="CHEBI:58210"/>
    </ligand>
</feature>
<feature type="binding site" evidence="1">
    <location>
        <position position="288"/>
    </location>
    <ligand>
        <name>FMN</name>
        <dbReference type="ChEBI" id="CHEBI:58210"/>
    </ligand>
</feature>
<feature type="binding site" evidence="1">
    <location>
        <begin position="303"/>
        <end position="307"/>
    </location>
    <ligand>
        <name>FMN</name>
        <dbReference type="ChEBI" id="CHEBI:58210"/>
    </ligand>
</feature>
<feature type="binding site" evidence="1">
    <location>
        <position position="329"/>
    </location>
    <ligand>
        <name>FMN</name>
        <dbReference type="ChEBI" id="CHEBI:58210"/>
    </ligand>
</feature>
<comment type="function">
    <text evidence="1">Catalyzes the anti-1,4-elimination of the C-3 phosphate and the C-6 proR hydrogen from 5-enolpyruvylshikimate-3-phosphate (EPSP) to yield chorismate, which is the branch point compound that serves as the starting substrate for the three terminal pathways of aromatic amino acid biosynthesis. This reaction introduces a second double bond into the aromatic ring system.</text>
</comment>
<comment type="catalytic activity">
    <reaction evidence="1">
        <text>5-O-(1-carboxyvinyl)-3-phosphoshikimate = chorismate + phosphate</text>
        <dbReference type="Rhea" id="RHEA:21020"/>
        <dbReference type="ChEBI" id="CHEBI:29748"/>
        <dbReference type="ChEBI" id="CHEBI:43474"/>
        <dbReference type="ChEBI" id="CHEBI:57701"/>
        <dbReference type="EC" id="4.2.3.5"/>
    </reaction>
</comment>
<comment type="cofactor">
    <cofactor evidence="1">
        <name>FMNH2</name>
        <dbReference type="ChEBI" id="CHEBI:57618"/>
    </cofactor>
    <text evidence="1">Reduced FMN (FMNH(2)).</text>
</comment>
<comment type="pathway">
    <text evidence="1">Metabolic intermediate biosynthesis; chorismate biosynthesis; chorismate from D-erythrose 4-phosphate and phosphoenolpyruvate: step 7/7.</text>
</comment>
<comment type="subunit">
    <text evidence="1">Homotetramer.</text>
</comment>
<comment type="similarity">
    <text evidence="1">Belongs to the chorismate synthase family.</text>
</comment>
<gene>
    <name evidence="1" type="primary">aroC</name>
    <name type="ordered locus">BCAN_A0432</name>
</gene>
<organism>
    <name type="scientific">Brucella canis (strain ATCC 23365 / NCTC 10854 / RM-666)</name>
    <dbReference type="NCBI Taxonomy" id="483179"/>
    <lineage>
        <taxon>Bacteria</taxon>
        <taxon>Pseudomonadati</taxon>
        <taxon>Pseudomonadota</taxon>
        <taxon>Alphaproteobacteria</taxon>
        <taxon>Hyphomicrobiales</taxon>
        <taxon>Brucellaceae</taxon>
        <taxon>Brucella/Ochrobactrum group</taxon>
        <taxon>Brucella</taxon>
    </lineage>
</organism>